<name>IBP_LENED</name>
<proteinExistence type="evidence at transcript level"/>
<comment type="function">
    <text evidence="7">Binds ice crystals and most probably inhibits their growth in order to prevent cell damage from extracellular ice.</text>
</comment>
<comment type="subcellular location">
    <subcellularLocation>
        <location evidence="6">Secreted</location>
    </subcellularLocation>
</comment>
<comment type="similarity">
    <text evidence="6">Belongs to the ice-binding protein family.</text>
</comment>
<accession>B8XC04</accession>
<keyword id="KW-0325">Glycoprotein</keyword>
<keyword id="KW-0964">Secreted</keyword>
<keyword id="KW-0732">Signal</keyword>
<dbReference type="EMBL" id="FJ200002">
    <property type="protein sequence ID" value="ACL27145.1"/>
    <property type="molecule type" value="mRNA"/>
</dbReference>
<dbReference type="EMBL" id="FJ200003">
    <property type="protein sequence ID" value="ACL27146.1"/>
    <property type="molecule type" value="Genomic_DNA"/>
</dbReference>
<dbReference type="RefSeq" id="XP_046090067.1">
    <property type="nucleotide sequence ID" value="XM_046227401.1"/>
</dbReference>
<dbReference type="SMR" id="B8XC04"/>
<dbReference type="GeneID" id="70257768"/>
<dbReference type="GO" id="GO:0005576">
    <property type="term" value="C:extracellular region"/>
    <property type="evidence" value="ECO:0007669"/>
    <property type="project" value="UniProtKB-SubCell"/>
</dbReference>
<dbReference type="InterPro" id="IPR021884">
    <property type="entry name" value="Ice-bd_prot"/>
</dbReference>
<dbReference type="Pfam" id="PF11999">
    <property type="entry name" value="Ice_binding"/>
    <property type="match status" value="1"/>
</dbReference>
<feature type="signal peptide" evidence="3">
    <location>
        <begin position="1"/>
        <end position="22"/>
    </location>
</feature>
<feature type="chain" id="PRO_5007645459" description="Ice-binding protein" evidence="3">
    <location>
        <begin position="23"/>
        <end position="288"/>
    </location>
</feature>
<feature type="short sequence motif" description="Ice-binding site motif (T-A/G-X-T/N) 1" evidence="2">
    <location>
        <begin position="75"/>
        <end position="78"/>
    </location>
</feature>
<feature type="short sequence motif" description="Ice-binding site motif (T-A/G-X-T/N) 2" evidence="2">
    <location>
        <begin position="154"/>
        <end position="157"/>
    </location>
</feature>
<feature type="short sequence motif" description="Ice-binding site motif (T-A/G-X-T/N) 3" evidence="2">
    <location>
        <begin position="196"/>
        <end position="199"/>
    </location>
</feature>
<feature type="short sequence motif" description="Ice-binding site motif (T-A/G-X-T/N) 4" evidence="2">
    <location>
        <begin position="265"/>
        <end position="268"/>
    </location>
</feature>
<feature type="site" description="Ice-binding" evidence="1">
    <location>
        <position position="110"/>
    </location>
</feature>
<feature type="site" description="Ice-binding" evidence="1">
    <location>
        <position position="192"/>
    </location>
</feature>
<feature type="site" description="Ice-binding" evidence="2">
    <location>
        <position position="265"/>
    </location>
</feature>
<feature type="site" description="Ice-binding" evidence="1">
    <location>
        <position position="280"/>
    </location>
</feature>
<feature type="glycosylation site" description="N-linked (GlcNAc...) asparagine" evidence="4">
    <location>
        <position position="194"/>
    </location>
</feature>
<organism evidence="8">
    <name type="scientific">Lentinula edodes</name>
    <name type="common">Shiitake mushroom</name>
    <name type="synonym">Lentinus edodes</name>
    <dbReference type="NCBI Taxonomy" id="5353"/>
    <lineage>
        <taxon>Eukaryota</taxon>
        <taxon>Fungi</taxon>
        <taxon>Dikarya</taxon>
        <taxon>Basidiomycota</taxon>
        <taxon>Agaricomycotina</taxon>
        <taxon>Agaricomycetes</taxon>
        <taxon>Agaricomycetidae</taxon>
        <taxon>Agaricales</taxon>
        <taxon>Marasmiineae</taxon>
        <taxon>Omphalotaceae</taxon>
        <taxon>Lentinula</taxon>
    </lineage>
</organism>
<evidence type="ECO:0000250" key="1">
    <source>
        <dbReference type="UniProtKB" id="C7F6X3"/>
    </source>
</evidence>
<evidence type="ECO:0000250" key="2">
    <source>
        <dbReference type="UniProtKB" id="H7FWB6"/>
    </source>
</evidence>
<evidence type="ECO:0000255" key="3"/>
<evidence type="ECO:0000255" key="4">
    <source>
        <dbReference type="PROSITE-ProRule" id="PRU00498"/>
    </source>
</evidence>
<evidence type="ECO:0000303" key="5">
    <source>
    </source>
</evidence>
<evidence type="ECO:0000305" key="6"/>
<evidence type="ECO:0000305" key="7">
    <source>
    </source>
</evidence>
<evidence type="ECO:0000312" key="8">
    <source>
        <dbReference type="EMBL" id="ACL27145.1"/>
    </source>
</evidence>
<sequence length="288" mass="27986">MFSTTLINTFSLGLLAVVSVVAAPGGISVGPISIGPGGISLGPGGISIGPGGINLGPGGGPGAINAGPAAVNLGTAGNYAILAKSGISTVPESIISGNIGVSPISTTAFTGFSETLDSTGKFATSQQVVGELFAASFAAPTPTTLTTAVSDMQTAFNDATGRVTPDFTNLGGGELGGLVLTPGLYKWTGAVSVNSTGVTIAGTPLDHFIFQIPATLGFAAASRVTLVGGIPASNIVWAATSVVTAGAGSHIEGVVLAKTAVTLETGATMNGRILAQTFVALQSATVIG</sequence>
<reference evidence="8" key="1">
    <citation type="journal article" date="2009" name="Cryobiology">
        <title>Ice-binding proteins from enoki and shiitake mushrooms.</title>
        <authorList>
            <person name="Raymond J.A."/>
            <person name="Janech M.G."/>
        </authorList>
    </citation>
    <scope>NUCLEOTIDE SEQUENCE [GENOMIC DNA / MRNA]</scope>
    <scope>FUNCTION</scope>
</reference>
<protein>
    <recommendedName>
        <fullName evidence="5 8">Ice-binding protein</fullName>
    </recommendedName>
    <alternativeName>
        <fullName evidence="6">Antifreeze protein</fullName>
        <shortName evidence="6">AFP</shortName>
    </alternativeName>
</protein>